<evidence type="ECO:0000255" key="1">
    <source>
        <dbReference type="HAMAP-Rule" id="MF_01418"/>
    </source>
</evidence>
<accession>B7NI01</accession>
<name>SPEB_ECO7I</name>
<comment type="function">
    <text evidence="1">Catalyzes the formation of putrescine from agmatine.</text>
</comment>
<comment type="catalytic activity">
    <reaction evidence="1">
        <text>agmatine + H2O = urea + putrescine</text>
        <dbReference type="Rhea" id="RHEA:13929"/>
        <dbReference type="ChEBI" id="CHEBI:15377"/>
        <dbReference type="ChEBI" id="CHEBI:16199"/>
        <dbReference type="ChEBI" id="CHEBI:58145"/>
        <dbReference type="ChEBI" id="CHEBI:326268"/>
        <dbReference type="EC" id="3.5.3.11"/>
    </reaction>
</comment>
<comment type="cofactor">
    <cofactor evidence="1">
        <name>Mn(2+)</name>
        <dbReference type="ChEBI" id="CHEBI:29035"/>
    </cofactor>
</comment>
<comment type="pathway">
    <text evidence="1">Amine and polyamine biosynthesis; putrescine biosynthesis via agmatine pathway; putrescine from agmatine: step 1/1.</text>
</comment>
<comment type="similarity">
    <text evidence="1">Belongs to the arginase family. Agmatinase subfamily.</text>
</comment>
<protein>
    <recommendedName>
        <fullName evidence="1">Agmatinase</fullName>
        <ecNumber evidence="1">3.5.3.11</ecNumber>
    </recommendedName>
    <alternativeName>
        <fullName evidence="1">Agmatine ureohydrolase</fullName>
        <shortName evidence="1">AUH</shortName>
    </alternativeName>
</protein>
<organism>
    <name type="scientific">Escherichia coli O7:K1 (strain IAI39 / ExPEC)</name>
    <dbReference type="NCBI Taxonomy" id="585057"/>
    <lineage>
        <taxon>Bacteria</taxon>
        <taxon>Pseudomonadati</taxon>
        <taxon>Pseudomonadota</taxon>
        <taxon>Gammaproteobacteria</taxon>
        <taxon>Enterobacterales</taxon>
        <taxon>Enterobacteriaceae</taxon>
        <taxon>Escherichia</taxon>
    </lineage>
</organism>
<proteinExistence type="inferred from homology"/>
<reference key="1">
    <citation type="journal article" date="2009" name="PLoS Genet.">
        <title>Organised genome dynamics in the Escherichia coli species results in highly diverse adaptive paths.</title>
        <authorList>
            <person name="Touchon M."/>
            <person name="Hoede C."/>
            <person name="Tenaillon O."/>
            <person name="Barbe V."/>
            <person name="Baeriswyl S."/>
            <person name="Bidet P."/>
            <person name="Bingen E."/>
            <person name="Bonacorsi S."/>
            <person name="Bouchier C."/>
            <person name="Bouvet O."/>
            <person name="Calteau A."/>
            <person name="Chiapello H."/>
            <person name="Clermont O."/>
            <person name="Cruveiller S."/>
            <person name="Danchin A."/>
            <person name="Diard M."/>
            <person name="Dossat C."/>
            <person name="Karoui M.E."/>
            <person name="Frapy E."/>
            <person name="Garry L."/>
            <person name="Ghigo J.M."/>
            <person name="Gilles A.M."/>
            <person name="Johnson J."/>
            <person name="Le Bouguenec C."/>
            <person name="Lescat M."/>
            <person name="Mangenot S."/>
            <person name="Martinez-Jehanne V."/>
            <person name="Matic I."/>
            <person name="Nassif X."/>
            <person name="Oztas S."/>
            <person name="Petit M.A."/>
            <person name="Pichon C."/>
            <person name="Rouy Z."/>
            <person name="Ruf C.S."/>
            <person name="Schneider D."/>
            <person name="Tourret J."/>
            <person name="Vacherie B."/>
            <person name="Vallenet D."/>
            <person name="Medigue C."/>
            <person name="Rocha E.P.C."/>
            <person name="Denamur E."/>
        </authorList>
    </citation>
    <scope>NUCLEOTIDE SEQUENCE [LARGE SCALE GENOMIC DNA]</scope>
    <source>
        <strain>IAI39 / ExPEC</strain>
    </source>
</reference>
<gene>
    <name evidence="1" type="primary">speB</name>
    <name type="ordered locus">ECIAI39_3356</name>
</gene>
<feature type="chain" id="PRO_1000145609" description="Agmatinase">
    <location>
        <begin position="1"/>
        <end position="306"/>
    </location>
</feature>
<feature type="binding site" evidence="1">
    <location>
        <position position="126"/>
    </location>
    <ligand>
        <name>Mn(2+)</name>
        <dbReference type="ChEBI" id="CHEBI:29035"/>
    </ligand>
</feature>
<feature type="binding site" evidence="1">
    <location>
        <position position="149"/>
    </location>
    <ligand>
        <name>Mn(2+)</name>
        <dbReference type="ChEBI" id="CHEBI:29035"/>
    </ligand>
</feature>
<feature type="binding site" evidence="1">
    <location>
        <position position="151"/>
    </location>
    <ligand>
        <name>Mn(2+)</name>
        <dbReference type="ChEBI" id="CHEBI:29035"/>
    </ligand>
</feature>
<feature type="binding site" evidence="1">
    <location>
        <position position="153"/>
    </location>
    <ligand>
        <name>Mn(2+)</name>
        <dbReference type="ChEBI" id="CHEBI:29035"/>
    </ligand>
</feature>
<feature type="binding site" evidence="1">
    <location>
        <position position="230"/>
    </location>
    <ligand>
        <name>Mn(2+)</name>
        <dbReference type="ChEBI" id="CHEBI:29035"/>
    </ligand>
</feature>
<feature type="binding site" evidence="1">
    <location>
        <position position="232"/>
    </location>
    <ligand>
        <name>Mn(2+)</name>
        <dbReference type="ChEBI" id="CHEBI:29035"/>
    </ligand>
</feature>
<keyword id="KW-0378">Hydrolase</keyword>
<keyword id="KW-0464">Manganese</keyword>
<keyword id="KW-0479">Metal-binding</keyword>
<keyword id="KW-0620">Polyamine biosynthesis</keyword>
<keyword id="KW-0661">Putrescine biosynthesis</keyword>
<keyword id="KW-0745">Spermidine biosynthesis</keyword>
<dbReference type="EC" id="3.5.3.11" evidence="1"/>
<dbReference type="EMBL" id="CU928164">
    <property type="protein sequence ID" value="CAR19473.1"/>
    <property type="molecule type" value="Genomic_DNA"/>
</dbReference>
<dbReference type="RefSeq" id="WP_000105561.1">
    <property type="nucleotide sequence ID" value="NC_011750.1"/>
</dbReference>
<dbReference type="RefSeq" id="YP_002409277.1">
    <property type="nucleotide sequence ID" value="NC_011750.1"/>
</dbReference>
<dbReference type="SMR" id="B7NI01"/>
<dbReference type="STRING" id="585057.ECIAI39_3356"/>
<dbReference type="KEGG" id="ect:ECIAI39_3356"/>
<dbReference type="PATRIC" id="fig|585057.6.peg.3483"/>
<dbReference type="HOGENOM" id="CLU_039478_0_0_6"/>
<dbReference type="UniPathway" id="UPA00534">
    <property type="reaction ID" value="UER00287"/>
</dbReference>
<dbReference type="Proteomes" id="UP000000749">
    <property type="component" value="Chromosome"/>
</dbReference>
<dbReference type="GO" id="GO:0008783">
    <property type="term" value="F:agmatinase activity"/>
    <property type="evidence" value="ECO:0007669"/>
    <property type="project" value="UniProtKB-UniRule"/>
</dbReference>
<dbReference type="GO" id="GO:0030145">
    <property type="term" value="F:manganese ion binding"/>
    <property type="evidence" value="ECO:0007669"/>
    <property type="project" value="InterPro"/>
</dbReference>
<dbReference type="GO" id="GO:0033389">
    <property type="term" value="P:putrescine biosynthetic process from arginine, via agmatine"/>
    <property type="evidence" value="ECO:0007669"/>
    <property type="project" value="TreeGrafter"/>
</dbReference>
<dbReference type="GO" id="GO:0008295">
    <property type="term" value="P:spermidine biosynthetic process"/>
    <property type="evidence" value="ECO:0007669"/>
    <property type="project" value="UniProtKB-UniRule"/>
</dbReference>
<dbReference type="CDD" id="cd11592">
    <property type="entry name" value="Agmatinase_PAH"/>
    <property type="match status" value="1"/>
</dbReference>
<dbReference type="FunFam" id="3.40.800.10:FF:000001">
    <property type="entry name" value="Agmatinase"/>
    <property type="match status" value="1"/>
</dbReference>
<dbReference type="Gene3D" id="3.40.800.10">
    <property type="entry name" value="Ureohydrolase domain"/>
    <property type="match status" value="1"/>
</dbReference>
<dbReference type="HAMAP" id="MF_01418">
    <property type="entry name" value="SpeB"/>
    <property type="match status" value="1"/>
</dbReference>
<dbReference type="InterPro" id="IPR023694">
    <property type="entry name" value="Agmatinase"/>
</dbReference>
<dbReference type="InterPro" id="IPR005925">
    <property type="entry name" value="Agmatinase-rel"/>
</dbReference>
<dbReference type="InterPro" id="IPR006035">
    <property type="entry name" value="Ureohydrolase"/>
</dbReference>
<dbReference type="InterPro" id="IPR023696">
    <property type="entry name" value="Ureohydrolase_dom_sf"/>
</dbReference>
<dbReference type="InterPro" id="IPR020855">
    <property type="entry name" value="Ureohydrolase_Mn_BS"/>
</dbReference>
<dbReference type="NCBIfam" id="TIGR01230">
    <property type="entry name" value="agmatinase"/>
    <property type="match status" value="1"/>
</dbReference>
<dbReference type="NCBIfam" id="NF002564">
    <property type="entry name" value="PRK02190.1"/>
    <property type="match status" value="1"/>
</dbReference>
<dbReference type="PANTHER" id="PTHR11358">
    <property type="entry name" value="ARGINASE/AGMATINASE"/>
    <property type="match status" value="1"/>
</dbReference>
<dbReference type="PANTHER" id="PTHR11358:SF26">
    <property type="entry name" value="GUANIDINO ACID HYDROLASE, MITOCHONDRIAL"/>
    <property type="match status" value="1"/>
</dbReference>
<dbReference type="Pfam" id="PF00491">
    <property type="entry name" value="Arginase"/>
    <property type="match status" value="1"/>
</dbReference>
<dbReference type="PIRSF" id="PIRSF036979">
    <property type="entry name" value="Arginase"/>
    <property type="match status" value="1"/>
</dbReference>
<dbReference type="SUPFAM" id="SSF52768">
    <property type="entry name" value="Arginase/deacetylase"/>
    <property type="match status" value="1"/>
</dbReference>
<dbReference type="PROSITE" id="PS01053">
    <property type="entry name" value="ARGINASE_1"/>
    <property type="match status" value="1"/>
</dbReference>
<dbReference type="PROSITE" id="PS51409">
    <property type="entry name" value="ARGINASE_2"/>
    <property type="match status" value="1"/>
</dbReference>
<sequence length="306" mass="33527">MSTLGHQYDNSLVSNAFGFLRLPMNFQPYDSDADWVITGVPFDMATSGRAGGRHGPAAIRQVSTNLAWEHNRFPWNFDMRERLNVVDCGDLVYAFGDAREMSEKLQAHAEKLLAAGKRMLSFGGDHFVTLPLLRAHAKHFGKMALVHFDAHTDTYANGCEFDHGTMFYTAPKEGLIDPNHSVQIGIRTEFDKDNGFTVLDACQVNDRGVDDVIAQVKQIVGDMPVYLTFDIDCLDPAFAPGTGTPVIGGLTSDRAIKLVRGLKDLNIVGMDVVEVAPAYDQSEITALAAATLALEMLYIQAAKKGE</sequence>